<reference key="1">
    <citation type="journal article" date="2002" name="DNA Res.">
        <title>Complete genome structure of the thermophilic cyanobacterium Thermosynechococcus elongatus BP-1.</title>
        <authorList>
            <person name="Nakamura Y."/>
            <person name="Kaneko T."/>
            <person name="Sato S."/>
            <person name="Ikeuchi M."/>
            <person name="Katoh H."/>
            <person name="Sasamoto S."/>
            <person name="Watanabe A."/>
            <person name="Iriguchi M."/>
            <person name="Kawashima K."/>
            <person name="Kimura T."/>
            <person name="Kishida Y."/>
            <person name="Kiyokawa C."/>
            <person name="Kohara M."/>
            <person name="Matsumoto M."/>
            <person name="Matsuno A."/>
            <person name="Nakazaki N."/>
            <person name="Shimpo S."/>
            <person name="Sugimoto M."/>
            <person name="Takeuchi C."/>
            <person name="Yamada M."/>
            <person name="Tabata S."/>
        </authorList>
    </citation>
    <scope>NUCLEOTIDE SEQUENCE [LARGE SCALE GENOMIC DNA]</scope>
    <source>
        <strain>NIES-2133 / IAM M-273 / BP-1</strain>
    </source>
</reference>
<keyword id="KW-0227">DNA damage</keyword>
<keyword id="KW-0233">DNA recombination</keyword>
<keyword id="KW-0234">DNA repair</keyword>
<keyword id="KW-0479">Metal-binding</keyword>
<keyword id="KW-1185">Reference proteome</keyword>
<keyword id="KW-0862">Zinc</keyword>
<keyword id="KW-0863">Zinc-finger</keyword>
<sequence length="202" mass="22339">MSSVYTRPLARLIEQLQRLPGIGPKTAQRLALHLIKRPEADIQALAQALLEAKQQVGLCSVCFHLSAEPVCEICASPQRDNHTICVVADSRDVIAIEKTREYHGKYHVLGGLISPLEGITPEHLHIQPLIQRASQPQVEEVILAINPSIEGETTTLYVGQLLRPFVKVTRIAFGLPVGGDLDYADEMTLARALAGRREIEWQ</sequence>
<gene>
    <name evidence="1" type="primary">recR</name>
    <name type="ordered locus">tll2204</name>
</gene>
<feature type="chain" id="PRO_0000190408" description="Recombination protein RecR">
    <location>
        <begin position="1"/>
        <end position="202"/>
    </location>
</feature>
<feature type="domain" description="Toprim" evidence="1">
    <location>
        <begin position="82"/>
        <end position="176"/>
    </location>
</feature>
<feature type="zinc finger region" description="C4-type" evidence="1">
    <location>
        <begin position="59"/>
        <end position="74"/>
    </location>
</feature>
<accession>Q8DGV8</accession>
<evidence type="ECO:0000255" key="1">
    <source>
        <dbReference type="HAMAP-Rule" id="MF_00017"/>
    </source>
</evidence>
<protein>
    <recommendedName>
        <fullName evidence="1">Recombination protein RecR</fullName>
    </recommendedName>
</protein>
<proteinExistence type="inferred from homology"/>
<dbReference type="EMBL" id="BA000039">
    <property type="protein sequence ID" value="BAC09756.1"/>
    <property type="molecule type" value="Genomic_DNA"/>
</dbReference>
<dbReference type="RefSeq" id="NP_682994.1">
    <property type="nucleotide sequence ID" value="NC_004113.1"/>
</dbReference>
<dbReference type="RefSeq" id="WP_011058038.1">
    <property type="nucleotide sequence ID" value="NC_004113.1"/>
</dbReference>
<dbReference type="SMR" id="Q8DGV8"/>
<dbReference type="STRING" id="197221.gene:10748815"/>
<dbReference type="EnsemblBacteria" id="BAC09756">
    <property type="protein sequence ID" value="BAC09756"/>
    <property type="gene ID" value="BAC09756"/>
</dbReference>
<dbReference type="KEGG" id="tel:tll2204"/>
<dbReference type="PATRIC" id="fig|197221.4.peg.2312"/>
<dbReference type="eggNOG" id="COG0353">
    <property type="taxonomic scope" value="Bacteria"/>
</dbReference>
<dbReference type="Proteomes" id="UP000000440">
    <property type="component" value="Chromosome"/>
</dbReference>
<dbReference type="GO" id="GO:0003677">
    <property type="term" value="F:DNA binding"/>
    <property type="evidence" value="ECO:0007669"/>
    <property type="project" value="UniProtKB-UniRule"/>
</dbReference>
<dbReference type="GO" id="GO:0008270">
    <property type="term" value="F:zinc ion binding"/>
    <property type="evidence" value="ECO:0007669"/>
    <property type="project" value="UniProtKB-KW"/>
</dbReference>
<dbReference type="GO" id="GO:0006310">
    <property type="term" value="P:DNA recombination"/>
    <property type="evidence" value="ECO:0007669"/>
    <property type="project" value="UniProtKB-UniRule"/>
</dbReference>
<dbReference type="GO" id="GO:0006281">
    <property type="term" value="P:DNA repair"/>
    <property type="evidence" value="ECO:0007669"/>
    <property type="project" value="UniProtKB-UniRule"/>
</dbReference>
<dbReference type="CDD" id="cd01025">
    <property type="entry name" value="TOPRIM_recR"/>
    <property type="match status" value="1"/>
</dbReference>
<dbReference type="Gene3D" id="3.40.1360.10">
    <property type="match status" value="1"/>
</dbReference>
<dbReference type="Gene3D" id="6.10.250.240">
    <property type="match status" value="1"/>
</dbReference>
<dbReference type="Gene3D" id="1.10.8.420">
    <property type="entry name" value="RecR Domain 1"/>
    <property type="match status" value="1"/>
</dbReference>
<dbReference type="HAMAP" id="MF_00017">
    <property type="entry name" value="RecR"/>
    <property type="match status" value="1"/>
</dbReference>
<dbReference type="InterPro" id="IPR000093">
    <property type="entry name" value="DNA_Rcmb_RecR"/>
</dbReference>
<dbReference type="InterPro" id="IPR003583">
    <property type="entry name" value="Hlx-hairpin-Hlx_DNA-bd_motif"/>
</dbReference>
<dbReference type="InterPro" id="IPR023627">
    <property type="entry name" value="Rcmb_RecR"/>
</dbReference>
<dbReference type="InterPro" id="IPR015967">
    <property type="entry name" value="Rcmb_RecR_Znf"/>
</dbReference>
<dbReference type="InterPro" id="IPR006171">
    <property type="entry name" value="TOPRIM_dom"/>
</dbReference>
<dbReference type="InterPro" id="IPR034137">
    <property type="entry name" value="TOPRIM_RecR"/>
</dbReference>
<dbReference type="NCBIfam" id="TIGR00615">
    <property type="entry name" value="recR"/>
    <property type="match status" value="1"/>
</dbReference>
<dbReference type="PANTHER" id="PTHR30446">
    <property type="entry name" value="RECOMBINATION PROTEIN RECR"/>
    <property type="match status" value="1"/>
</dbReference>
<dbReference type="PANTHER" id="PTHR30446:SF0">
    <property type="entry name" value="RECOMBINATION PROTEIN RECR"/>
    <property type="match status" value="1"/>
</dbReference>
<dbReference type="Pfam" id="PF21175">
    <property type="entry name" value="RecR_C"/>
    <property type="match status" value="1"/>
</dbReference>
<dbReference type="Pfam" id="PF21176">
    <property type="entry name" value="RecR_HhH"/>
    <property type="match status" value="1"/>
</dbReference>
<dbReference type="Pfam" id="PF02132">
    <property type="entry name" value="RecR_ZnF"/>
    <property type="match status" value="1"/>
</dbReference>
<dbReference type="Pfam" id="PF13662">
    <property type="entry name" value="Toprim_4"/>
    <property type="match status" value="1"/>
</dbReference>
<dbReference type="SMART" id="SM00278">
    <property type="entry name" value="HhH1"/>
    <property type="match status" value="1"/>
</dbReference>
<dbReference type="SMART" id="SM00493">
    <property type="entry name" value="TOPRIM"/>
    <property type="match status" value="1"/>
</dbReference>
<dbReference type="SUPFAM" id="SSF111304">
    <property type="entry name" value="Recombination protein RecR"/>
    <property type="match status" value="1"/>
</dbReference>
<dbReference type="PROSITE" id="PS01300">
    <property type="entry name" value="RECR"/>
    <property type="match status" value="1"/>
</dbReference>
<dbReference type="PROSITE" id="PS50880">
    <property type="entry name" value="TOPRIM"/>
    <property type="match status" value="1"/>
</dbReference>
<comment type="function">
    <text evidence="1">May play a role in DNA repair. It seems to be involved in an RecBC-independent recombinational process of DNA repair. It may act with RecF and RecO.</text>
</comment>
<comment type="similarity">
    <text evidence="1">Belongs to the RecR family.</text>
</comment>
<organism>
    <name type="scientific">Thermosynechococcus vestitus (strain NIES-2133 / IAM M-273 / BP-1)</name>
    <dbReference type="NCBI Taxonomy" id="197221"/>
    <lineage>
        <taxon>Bacteria</taxon>
        <taxon>Bacillati</taxon>
        <taxon>Cyanobacteriota</taxon>
        <taxon>Cyanophyceae</taxon>
        <taxon>Acaryochloridales</taxon>
        <taxon>Thermosynechococcaceae</taxon>
        <taxon>Thermosynechococcus</taxon>
    </lineage>
</organism>
<name>RECR_THEVB</name>